<gene>
    <name type="primary">ylbG</name>
    <name type="ordered locus">SDY_0400</name>
</gene>
<sequence>MLHTANPVIKHKAGLLNLAEELSNVSKACKIMGVSRDTFYRYRELVAEGGVDAQINRSRRAPNLKNRTDEATEQAVVDYAVAFPTHGQHRASNELRKQGVFISDSGVRSVWLLHNLENLKRRY</sequence>
<protein>
    <recommendedName>
        <fullName>Uncharacterized protein YlbG</fullName>
    </recommendedName>
</protein>
<comment type="sequence caution" evidence="1">
    <conflict type="erroneous initiation">
        <sequence resource="EMBL-CDS" id="ABB60612"/>
    </conflict>
</comment>
<keyword id="KW-1185">Reference proteome</keyword>
<evidence type="ECO:0000305" key="1"/>
<proteinExistence type="predicted"/>
<organism>
    <name type="scientific">Shigella dysenteriae serotype 1 (strain Sd197)</name>
    <dbReference type="NCBI Taxonomy" id="300267"/>
    <lineage>
        <taxon>Bacteria</taxon>
        <taxon>Pseudomonadati</taxon>
        <taxon>Pseudomonadota</taxon>
        <taxon>Gammaproteobacteria</taxon>
        <taxon>Enterobacterales</taxon>
        <taxon>Enterobacteriaceae</taxon>
        <taxon>Shigella</taxon>
    </lineage>
</organism>
<reference key="1">
    <citation type="journal article" date="2005" name="Nucleic Acids Res.">
        <title>Genome dynamics and diversity of Shigella species, the etiologic agents of bacillary dysentery.</title>
        <authorList>
            <person name="Yang F."/>
            <person name="Yang J."/>
            <person name="Zhang X."/>
            <person name="Chen L."/>
            <person name="Jiang Y."/>
            <person name="Yan Y."/>
            <person name="Tang X."/>
            <person name="Wang J."/>
            <person name="Xiong Z."/>
            <person name="Dong J."/>
            <person name="Xue Y."/>
            <person name="Zhu Y."/>
            <person name="Xu X."/>
            <person name="Sun L."/>
            <person name="Chen S."/>
            <person name="Nie H."/>
            <person name="Peng J."/>
            <person name="Xu J."/>
            <person name="Wang Y."/>
            <person name="Yuan Z."/>
            <person name="Wen Y."/>
            <person name="Yao Z."/>
            <person name="Shen Y."/>
            <person name="Qiang B."/>
            <person name="Hou Y."/>
            <person name="Yu J."/>
            <person name="Jin Q."/>
        </authorList>
    </citation>
    <scope>NUCLEOTIDE SEQUENCE [LARGE SCALE GENOMIC DNA]</scope>
    <source>
        <strain>Sd197</strain>
    </source>
</reference>
<name>YLBG_SHIDS</name>
<feature type="chain" id="PRO_0000248937" description="Uncharacterized protein YlbG">
    <location>
        <begin position="1"/>
        <end position="123"/>
    </location>
</feature>
<dbReference type="EMBL" id="CP000034">
    <property type="protein sequence ID" value="ABB60612.1"/>
    <property type="status" value="ALT_INIT"/>
    <property type="molecule type" value="Genomic_DNA"/>
</dbReference>
<dbReference type="RefSeq" id="YP_402101.1">
    <property type="nucleotide sequence ID" value="NC_007606.1"/>
</dbReference>
<dbReference type="SMR" id="Q32J95"/>
<dbReference type="STRING" id="300267.SDY_0400"/>
<dbReference type="EnsemblBacteria" id="ABB60612">
    <property type="protein sequence ID" value="ABB60612"/>
    <property type="gene ID" value="SDY_0400"/>
</dbReference>
<dbReference type="KEGG" id="sdy:SDY_0400"/>
<dbReference type="PATRIC" id="fig|300267.13.peg.474"/>
<dbReference type="HOGENOM" id="CLU_067821_0_1_6"/>
<dbReference type="Proteomes" id="UP000002716">
    <property type="component" value="Chromosome"/>
</dbReference>
<dbReference type="InterPro" id="IPR009057">
    <property type="entry name" value="Homeodomain-like_sf"/>
</dbReference>
<dbReference type="Pfam" id="PF13551">
    <property type="entry name" value="HTH_29"/>
    <property type="match status" value="1"/>
</dbReference>
<dbReference type="SUPFAM" id="SSF46689">
    <property type="entry name" value="Homeodomain-like"/>
    <property type="match status" value="1"/>
</dbReference>
<accession>Q32J95</accession>